<reference key="1">
    <citation type="journal article" date="1990" name="Biochem. Biophys. Res. Commun.">
        <title>Molecular analysis of an acatalasemic mouse mutant.</title>
        <authorList>
            <person name="Shaffer J.B."/>
            <person name="Preston K.E."/>
        </authorList>
    </citation>
    <scope>NUCLEOTIDE SEQUENCE [MRNA]</scope>
    <scope>MUTAGENESIS OF GLN-11</scope>
    <source>
        <strain>C3H/CS(A)</strain>
        <tissue>Kidney</tissue>
        <tissue>Liver</tissue>
    </source>
</reference>
<reference key="2">
    <citation type="journal article" date="1990" name="Nucleic Acids Res.">
        <title>Nucleotide and deduced amino acid sequences of mouse catalase: molecular analysis of a low activity mutant.</title>
        <authorList>
            <person name="Shaffer J.B."/>
            <person name="Preston K.E."/>
            <person name="Shepard B.A."/>
        </authorList>
    </citation>
    <scope>NUCLEOTIDE SEQUENCE [MRNA]</scope>
    <source>
        <strain>C3H/CS(A)</strain>
        <strain>C3H/HeJ</strain>
        <tissue>Liver</tissue>
    </source>
</reference>
<reference key="3">
    <citation type="journal article" date="1994" name="Genomics">
        <title>Complete cDNA and 5' genomic sequences and multilevel regulation of the mouse catalase gene.</title>
        <authorList>
            <person name="Reimer D.L."/>
            <person name="Bailley J."/>
            <person name="Singh S.M."/>
        </authorList>
    </citation>
    <scope>NUCLEOTIDE SEQUENCE [MRNA]</scope>
    <source>
        <strain>BALB/cJ</strain>
        <tissue>Liver</tissue>
    </source>
</reference>
<reference key="4">
    <citation type="journal article" date="2005" name="Science">
        <title>The transcriptional landscape of the mammalian genome.</title>
        <authorList>
            <person name="Carninci P."/>
            <person name="Kasukawa T."/>
            <person name="Katayama S."/>
            <person name="Gough J."/>
            <person name="Frith M.C."/>
            <person name="Maeda N."/>
            <person name="Oyama R."/>
            <person name="Ravasi T."/>
            <person name="Lenhard B."/>
            <person name="Wells C."/>
            <person name="Kodzius R."/>
            <person name="Shimokawa K."/>
            <person name="Bajic V.B."/>
            <person name="Brenner S.E."/>
            <person name="Batalov S."/>
            <person name="Forrest A.R."/>
            <person name="Zavolan M."/>
            <person name="Davis M.J."/>
            <person name="Wilming L.G."/>
            <person name="Aidinis V."/>
            <person name="Allen J.E."/>
            <person name="Ambesi-Impiombato A."/>
            <person name="Apweiler R."/>
            <person name="Aturaliya R.N."/>
            <person name="Bailey T.L."/>
            <person name="Bansal M."/>
            <person name="Baxter L."/>
            <person name="Beisel K.W."/>
            <person name="Bersano T."/>
            <person name="Bono H."/>
            <person name="Chalk A.M."/>
            <person name="Chiu K.P."/>
            <person name="Choudhary V."/>
            <person name="Christoffels A."/>
            <person name="Clutterbuck D.R."/>
            <person name="Crowe M.L."/>
            <person name="Dalla E."/>
            <person name="Dalrymple B.P."/>
            <person name="de Bono B."/>
            <person name="Della Gatta G."/>
            <person name="di Bernardo D."/>
            <person name="Down T."/>
            <person name="Engstrom P."/>
            <person name="Fagiolini M."/>
            <person name="Faulkner G."/>
            <person name="Fletcher C.F."/>
            <person name="Fukushima T."/>
            <person name="Furuno M."/>
            <person name="Futaki S."/>
            <person name="Gariboldi M."/>
            <person name="Georgii-Hemming P."/>
            <person name="Gingeras T.R."/>
            <person name="Gojobori T."/>
            <person name="Green R.E."/>
            <person name="Gustincich S."/>
            <person name="Harbers M."/>
            <person name="Hayashi Y."/>
            <person name="Hensch T.K."/>
            <person name="Hirokawa N."/>
            <person name="Hill D."/>
            <person name="Huminiecki L."/>
            <person name="Iacono M."/>
            <person name="Ikeo K."/>
            <person name="Iwama A."/>
            <person name="Ishikawa T."/>
            <person name="Jakt M."/>
            <person name="Kanapin A."/>
            <person name="Katoh M."/>
            <person name="Kawasawa Y."/>
            <person name="Kelso J."/>
            <person name="Kitamura H."/>
            <person name="Kitano H."/>
            <person name="Kollias G."/>
            <person name="Krishnan S.P."/>
            <person name="Kruger A."/>
            <person name="Kummerfeld S.K."/>
            <person name="Kurochkin I.V."/>
            <person name="Lareau L.F."/>
            <person name="Lazarevic D."/>
            <person name="Lipovich L."/>
            <person name="Liu J."/>
            <person name="Liuni S."/>
            <person name="McWilliam S."/>
            <person name="Madan Babu M."/>
            <person name="Madera M."/>
            <person name="Marchionni L."/>
            <person name="Matsuda H."/>
            <person name="Matsuzawa S."/>
            <person name="Miki H."/>
            <person name="Mignone F."/>
            <person name="Miyake S."/>
            <person name="Morris K."/>
            <person name="Mottagui-Tabar S."/>
            <person name="Mulder N."/>
            <person name="Nakano N."/>
            <person name="Nakauchi H."/>
            <person name="Ng P."/>
            <person name="Nilsson R."/>
            <person name="Nishiguchi S."/>
            <person name="Nishikawa S."/>
            <person name="Nori F."/>
            <person name="Ohara O."/>
            <person name="Okazaki Y."/>
            <person name="Orlando V."/>
            <person name="Pang K.C."/>
            <person name="Pavan W.J."/>
            <person name="Pavesi G."/>
            <person name="Pesole G."/>
            <person name="Petrovsky N."/>
            <person name="Piazza S."/>
            <person name="Reed J."/>
            <person name="Reid J.F."/>
            <person name="Ring B.Z."/>
            <person name="Ringwald M."/>
            <person name="Rost B."/>
            <person name="Ruan Y."/>
            <person name="Salzberg S.L."/>
            <person name="Sandelin A."/>
            <person name="Schneider C."/>
            <person name="Schoenbach C."/>
            <person name="Sekiguchi K."/>
            <person name="Semple C.A."/>
            <person name="Seno S."/>
            <person name="Sessa L."/>
            <person name="Sheng Y."/>
            <person name="Shibata Y."/>
            <person name="Shimada H."/>
            <person name="Shimada K."/>
            <person name="Silva D."/>
            <person name="Sinclair B."/>
            <person name="Sperling S."/>
            <person name="Stupka E."/>
            <person name="Sugiura K."/>
            <person name="Sultana R."/>
            <person name="Takenaka Y."/>
            <person name="Taki K."/>
            <person name="Tammoja K."/>
            <person name="Tan S.L."/>
            <person name="Tang S."/>
            <person name="Taylor M.S."/>
            <person name="Tegner J."/>
            <person name="Teichmann S.A."/>
            <person name="Ueda H.R."/>
            <person name="van Nimwegen E."/>
            <person name="Verardo R."/>
            <person name="Wei C.L."/>
            <person name="Yagi K."/>
            <person name="Yamanishi H."/>
            <person name="Zabarovsky E."/>
            <person name="Zhu S."/>
            <person name="Zimmer A."/>
            <person name="Hide W."/>
            <person name="Bult C."/>
            <person name="Grimmond S.M."/>
            <person name="Teasdale R.D."/>
            <person name="Liu E.T."/>
            <person name="Brusic V."/>
            <person name="Quackenbush J."/>
            <person name="Wahlestedt C."/>
            <person name="Mattick J.S."/>
            <person name="Hume D.A."/>
            <person name="Kai C."/>
            <person name="Sasaki D."/>
            <person name="Tomaru Y."/>
            <person name="Fukuda S."/>
            <person name="Kanamori-Katayama M."/>
            <person name="Suzuki M."/>
            <person name="Aoki J."/>
            <person name="Arakawa T."/>
            <person name="Iida J."/>
            <person name="Imamura K."/>
            <person name="Itoh M."/>
            <person name="Kato T."/>
            <person name="Kawaji H."/>
            <person name="Kawagashira N."/>
            <person name="Kawashima T."/>
            <person name="Kojima M."/>
            <person name="Kondo S."/>
            <person name="Konno H."/>
            <person name="Nakano K."/>
            <person name="Ninomiya N."/>
            <person name="Nishio T."/>
            <person name="Okada M."/>
            <person name="Plessy C."/>
            <person name="Shibata K."/>
            <person name="Shiraki T."/>
            <person name="Suzuki S."/>
            <person name="Tagami M."/>
            <person name="Waki K."/>
            <person name="Watahiki A."/>
            <person name="Okamura-Oho Y."/>
            <person name="Suzuki H."/>
            <person name="Kawai J."/>
            <person name="Hayashizaki Y."/>
        </authorList>
    </citation>
    <scope>NUCLEOTIDE SEQUENCE [LARGE SCALE MRNA]</scope>
    <source>
        <strain>C57BL/6J</strain>
        <tissue>Amnion</tissue>
        <tissue>Bone marrow</tissue>
    </source>
</reference>
<reference key="5">
    <citation type="journal article" date="2009" name="PLoS Biol.">
        <title>Lineage-specific biology revealed by a finished genome assembly of the mouse.</title>
        <authorList>
            <person name="Church D.M."/>
            <person name="Goodstadt L."/>
            <person name="Hillier L.W."/>
            <person name="Zody M.C."/>
            <person name="Goldstein S."/>
            <person name="She X."/>
            <person name="Bult C.J."/>
            <person name="Agarwala R."/>
            <person name="Cherry J.L."/>
            <person name="DiCuccio M."/>
            <person name="Hlavina W."/>
            <person name="Kapustin Y."/>
            <person name="Meric P."/>
            <person name="Maglott D."/>
            <person name="Birtle Z."/>
            <person name="Marques A.C."/>
            <person name="Graves T."/>
            <person name="Zhou S."/>
            <person name="Teague B."/>
            <person name="Potamousis K."/>
            <person name="Churas C."/>
            <person name="Place M."/>
            <person name="Herschleb J."/>
            <person name="Runnheim R."/>
            <person name="Forrest D."/>
            <person name="Amos-Landgraf J."/>
            <person name="Schwartz D.C."/>
            <person name="Cheng Z."/>
            <person name="Lindblad-Toh K."/>
            <person name="Eichler E.E."/>
            <person name="Ponting C.P."/>
        </authorList>
    </citation>
    <scope>NUCLEOTIDE SEQUENCE [LARGE SCALE GENOMIC DNA]</scope>
    <source>
        <strain>C57BL/6J</strain>
    </source>
</reference>
<reference key="6">
    <citation type="submission" date="2005-07" db="EMBL/GenBank/DDBJ databases">
        <authorList>
            <person name="Mural R.J."/>
            <person name="Adams M.D."/>
            <person name="Myers E.W."/>
            <person name="Smith H.O."/>
            <person name="Venter J.C."/>
        </authorList>
    </citation>
    <scope>NUCLEOTIDE SEQUENCE [LARGE SCALE GENOMIC DNA]</scope>
</reference>
<reference key="7">
    <citation type="journal article" date="2004" name="Genome Res.">
        <title>The status, quality, and expansion of the NIH full-length cDNA project: the Mammalian Gene Collection (MGC).</title>
        <authorList>
            <consortium name="The MGC Project Team"/>
        </authorList>
    </citation>
    <scope>NUCLEOTIDE SEQUENCE [LARGE SCALE MRNA]</scope>
    <source>
        <strain>FVB/N</strain>
        <tissue>Kidney</tissue>
    </source>
</reference>
<reference key="8">
    <citation type="submission" date="2006-03" db="UniProtKB">
        <authorList>
            <person name="Kanor S."/>
            <person name="Quadroni M."/>
            <person name="Bienvenut W.V."/>
        </authorList>
    </citation>
    <scope>PROTEIN SEQUENCE OF 2-12; 221-232; 287-300; 306-314 AND 468-475</scope>
    <scope>CLEAVAGE OF INITIATOR METHIONINE</scope>
    <scope>ACETYLATION AT SER-2</scope>
    <scope>IDENTIFICATION BY MASS SPECTROMETRY</scope>
    <source>
        <strain>C57BL/6J</strain>
        <tissue>Skeletal muscle</tissue>
    </source>
</reference>
<reference key="9">
    <citation type="submission" date="2009-01" db="UniProtKB">
        <authorList>
            <person name="Lubec G."/>
            <person name="Sunyer B."/>
            <person name="Chen W.-Q."/>
        </authorList>
    </citation>
    <scope>PROTEIN SEQUENCE OF 48-66</scope>
    <scope>IDENTIFICATION BY MASS SPECTROMETRY</scope>
    <source>
        <strain>OF1</strain>
        <tissue>Hippocampus</tissue>
    </source>
</reference>
<reference key="10">
    <citation type="journal article" date="1987" name="J. Biol. Chem.">
        <title>Isolation of a cDNA clone for murine catalase and analysis of an acatalasemic mutant.</title>
        <authorList>
            <person name="Shaffer J.B."/>
            <person name="Sutton R.B."/>
            <person name="Bewley G.C."/>
        </authorList>
    </citation>
    <scope>NUCLEOTIDE SEQUENCE [MRNA] OF 503-527</scope>
</reference>
<reference key="11">
    <citation type="journal article" date="1986" name="Experientia">
        <title>Ultrastructural localization of catalase and D-amino acid oxidase in 'normal' fetal mouse liver.</title>
        <authorList>
            <person name="Dabholkar A.S."/>
        </authorList>
    </citation>
    <scope>SUBCELLULAR LOCATION</scope>
</reference>
<reference key="12">
    <citation type="journal article" date="2007" name="Mol. Cell. Proteomics">
        <title>Mitochondrial phosphoproteome revealed by an improved IMAC method and MS/MS/MS.</title>
        <authorList>
            <person name="Lee J."/>
            <person name="Xu Y."/>
            <person name="Chen Y."/>
            <person name="Sprung R."/>
            <person name="Kim S.C."/>
            <person name="Xie S."/>
            <person name="Zhao Y."/>
        </authorList>
    </citation>
    <scope>PHOSPHORYLATION [LARGE SCALE ANALYSIS] AT SER-21; SER-422 AND SER-517</scope>
    <scope>IDENTIFICATION BY MASS SPECTROMETRY [LARGE SCALE ANALYSIS]</scope>
    <source>
        <tissue>Liver</tissue>
    </source>
</reference>
<reference key="13">
    <citation type="journal article" date="2007" name="Proc. Natl. Acad. Sci. U.S.A.">
        <title>Large-scale phosphorylation analysis of mouse liver.</title>
        <authorList>
            <person name="Villen J."/>
            <person name="Beausoleil S.A."/>
            <person name="Gerber S.A."/>
            <person name="Gygi S.P."/>
        </authorList>
    </citation>
    <scope>PHOSPHORYLATION [LARGE SCALE ANALYSIS] AT SER-417 AND SER-434</scope>
    <scope>IDENTIFICATION BY MASS SPECTROMETRY [LARGE SCALE ANALYSIS]</scope>
    <source>
        <tissue>Liver</tissue>
    </source>
</reference>
<reference key="14">
    <citation type="journal article" date="2010" name="Cell">
        <title>A tissue-specific atlas of mouse protein phosphorylation and expression.</title>
        <authorList>
            <person name="Huttlin E.L."/>
            <person name="Jedrychowski M.P."/>
            <person name="Elias J.E."/>
            <person name="Goswami T."/>
            <person name="Rad R."/>
            <person name="Beausoleil S.A."/>
            <person name="Villen J."/>
            <person name="Haas W."/>
            <person name="Sowa M.E."/>
            <person name="Gygi S.P."/>
        </authorList>
    </citation>
    <scope>PHOSPHORYLATION [LARGE SCALE ANALYSIS] AT SER-21; SER-434 AND SER-517</scope>
    <scope>IDENTIFICATION BY MASS SPECTROMETRY [LARGE SCALE ANALYSIS]</scope>
    <source>
        <tissue>Brain</tissue>
        <tissue>Brown adipose tissue</tissue>
        <tissue>Heart</tissue>
        <tissue>Kidney</tissue>
        <tissue>Liver</tissue>
        <tissue>Lung</tissue>
        <tissue>Pancreas</tissue>
        <tissue>Spleen</tissue>
        <tissue>Testis</tissue>
    </source>
</reference>
<reference key="15">
    <citation type="journal article" date="2013" name="Mol. Cell">
        <title>SIRT5-mediated lysine desuccinylation impacts diverse metabolic pathways.</title>
        <authorList>
            <person name="Park J."/>
            <person name="Chen Y."/>
            <person name="Tishkoff D.X."/>
            <person name="Peng C."/>
            <person name="Tan M."/>
            <person name="Dai L."/>
            <person name="Xie Z."/>
            <person name="Zhang Y."/>
            <person name="Zwaans B.M."/>
            <person name="Skinner M.E."/>
            <person name="Lombard D.B."/>
            <person name="Zhao Y."/>
        </authorList>
    </citation>
    <scope>ACETYLATION [LARGE SCALE ANALYSIS] AT SER-2 AND LYS-449</scope>
    <scope>SUCCINYLATION [LARGE SCALE ANALYSIS] AT LYS-13; LYS-221; LYS-306; LYS-430; LYS-449; LYS-480 AND LYS-522</scope>
    <scope>CLEAVAGE OF INITIATOR METHIONINE [LARGE SCALE ANALYSIS]</scope>
    <scope>IDENTIFICATION BY MASS SPECTROMETRY [LARGE SCALE ANALYSIS]</scope>
    <source>
        <tissue>Embryonic fibroblast</tissue>
        <tissue>Liver</tissue>
    </source>
</reference>
<reference key="16">
    <citation type="journal article" date="2013" name="Proc. Natl. Acad. Sci. U.S.A.">
        <title>Label-free quantitative proteomics of the lysine acetylome in mitochondria identifies substrates of SIRT3 in metabolic pathways.</title>
        <authorList>
            <person name="Rardin M.J."/>
            <person name="Newman J.C."/>
            <person name="Held J.M."/>
            <person name="Cusack M.P."/>
            <person name="Sorensen D.J."/>
            <person name="Li B."/>
            <person name="Schilling B."/>
            <person name="Mooney S.D."/>
            <person name="Kahn C.R."/>
            <person name="Verdin E."/>
            <person name="Gibson B.W."/>
        </authorList>
    </citation>
    <scope>ACETYLATION [LARGE SCALE ANALYSIS] AT LYS-233; LYS-306; LYS-430; LYS-449; LYS-480 AND LYS-499</scope>
    <scope>IDENTIFICATION BY MASS SPECTROMETRY [LARGE SCALE ANALYSIS]</scope>
    <source>
        <tissue>Liver</tissue>
    </source>
</reference>
<gene>
    <name type="primary">Cat</name>
    <name type="synonym">Cas-1</name>
    <name type="synonym">Cas1</name>
</gene>
<sequence length="527" mass="59795">MSDSRDPASDQMKQWKEQRASQRPDVLTTGGGNPIGDKLNIMTAGSRGPLLVQDVVFTDEMAHFDRERIPERVVHAKGAGAFGYFEVTHDITRYSKAKVFEHIGKRTPIAVRFSTVTGESGSADTVRDPRGFAVKFYTEDGNWDLVGNNTPIFFIRDAILFPSFIHSQKRNPQTHLKDPDMVWDFWSLRPESLHQVSFLFSDRGIPDGHRHMNGYGSHTFKLVNADGEAVYCKFHYKTDQGIKNLPVGEAGRLAQEDPDYGLRDLFNAIANGNYPSWTFYIQVMTFKEAETFPFNPFDLTKVWPHKDYPLIPVGKLVLNKNPVNYFAEVEQMAFDPSNMPPGIEPSPDKMLQGRLFAYPDTHRHRLGPNYLQIPVNCPYRARVANYQRDGPMCMHDNQGGAPNYYPNSFSAPEQQRSALEHSVQCAVDVKRFNSANEDNVTQVRTFYTKVLNEEERKRLCENIAGHLKDAQLFIQKKAVKNFTDVHPDYGARIQALLDKYNAEKPKNAIHTYTQAGSHMAAKGKANL</sequence>
<evidence type="ECO:0000250" key="1">
    <source>
        <dbReference type="UniProtKB" id="P04040"/>
    </source>
</evidence>
<evidence type="ECO:0000255" key="2">
    <source>
        <dbReference type="PROSITE-ProRule" id="PRU10013"/>
    </source>
</evidence>
<evidence type="ECO:0000256" key="3">
    <source>
        <dbReference type="SAM" id="MobiDB-lite"/>
    </source>
</evidence>
<evidence type="ECO:0000269" key="4">
    <source>
    </source>
</evidence>
<evidence type="ECO:0000269" key="5">
    <source>
    </source>
</evidence>
<evidence type="ECO:0000269" key="6">
    <source ref="8"/>
</evidence>
<evidence type="ECO:0000305" key="7"/>
<evidence type="ECO:0007744" key="8">
    <source>
    </source>
</evidence>
<evidence type="ECO:0007744" key="9">
    <source>
    </source>
</evidence>
<evidence type="ECO:0007744" key="10">
    <source>
    </source>
</evidence>
<evidence type="ECO:0007744" key="11">
    <source>
    </source>
</evidence>
<evidence type="ECO:0007744" key="12">
    <source>
    </source>
</evidence>
<comment type="function">
    <text evidence="1">Catalyzes the degradation of hydrogen peroxide (H(2)O(2)) generated by peroxisomal oxidases to water and oxygen, thereby protecting cells from the toxic effects of hydrogen peroxide. Promotes growth of cells including T-cells, B-cells, myeloid leukemia cells, melanoma cells, mastocytoma cells and normal and transformed fibroblast cells.</text>
</comment>
<comment type="catalytic activity">
    <reaction evidence="2">
        <text>2 H2O2 = O2 + 2 H2O</text>
        <dbReference type="Rhea" id="RHEA:20309"/>
        <dbReference type="ChEBI" id="CHEBI:15377"/>
        <dbReference type="ChEBI" id="CHEBI:15379"/>
        <dbReference type="ChEBI" id="CHEBI:16240"/>
        <dbReference type="EC" id="1.11.1.6"/>
    </reaction>
</comment>
<comment type="cofactor">
    <cofactor evidence="1">
        <name>heme</name>
        <dbReference type="ChEBI" id="CHEBI:30413"/>
    </cofactor>
</comment>
<comment type="cofactor">
    <cofactor evidence="1">
        <name>NADP(+)</name>
        <dbReference type="ChEBI" id="CHEBI:58349"/>
    </cofactor>
</comment>
<comment type="subunit">
    <text evidence="1">Homotetramer. Interacts (via microbody targeting signal) with PEX5, monomeric form interacts with PEX5, leading to its translocation into peroxisomes.</text>
</comment>
<comment type="subcellular location">
    <subcellularLocation>
        <location evidence="5">Peroxisome matrix</location>
    </subcellularLocation>
</comment>
<comment type="similarity">
    <text evidence="7">Belongs to the catalase family.</text>
</comment>
<proteinExistence type="evidence at protein level"/>
<organism>
    <name type="scientific">Mus musculus</name>
    <name type="common">Mouse</name>
    <dbReference type="NCBI Taxonomy" id="10090"/>
    <lineage>
        <taxon>Eukaryota</taxon>
        <taxon>Metazoa</taxon>
        <taxon>Chordata</taxon>
        <taxon>Craniata</taxon>
        <taxon>Vertebrata</taxon>
        <taxon>Euteleostomi</taxon>
        <taxon>Mammalia</taxon>
        <taxon>Eutheria</taxon>
        <taxon>Euarchontoglires</taxon>
        <taxon>Glires</taxon>
        <taxon>Rodentia</taxon>
        <taxon>Myomorpha</taxon>
        <taxon>Muroidea</taxon>
        <taxon>Muridae</taxon>
        <taxon>Murinae</taxon>
        <taxon>Mus</taxon>
        <taxon>Mus</taxon>
    </lineage>
</organism>
<protein>
    <recommendedName>
        <fullName>Catalase</fullName>
        <ecNumber evidence="2">1.11.1.6</ecNumber>
    </recommendedName>
</protein>
<name>CATA_MOUSE</name>
<accession>P24270</accession>
<accession>Q3TXQ6</accession>
<feature type="initiator methionine" description="Removed" evidence="6 12">
    <location>
        <position position="1"/>
    </location>
</feature>
<feature type="chain" id="PRO_0000084902" description="Catalase">
    <location>
        <begin position="2"/>
        <end position="527"/>
    </location>
</feature>
<feature type="region of interest" description="Disordered" evidence="3">
    <location>
        <begin position="1"/>
        <end position="34"/>
    </location>
</feature>
<feature type="short sequence motif" description="Microbody targeting signal; atypical" evidence="1">
    <location>
        <begin position="524"/>
        <end position="527"/>
    </location>
</feature>
<feature type="compositionally biased region" description="Basic and acidic residues" evidence="3">
    <location>
        <begin position="1"/>
        <end position="22"/>
    </location>
</feature>
<feature type="active site" evidence="2">
    <location>
        <position position="75"/>
    </location>
</feature>
<feature type="active site" evidence="2">
    <location>
        <position position="148"/>
    </location>
</feature>
<feature type="binding site" evidence="1">
    <location>
        <position position="194"/>
    </location>
    <ligand>
        <name>NADP(+)</name>
        <dbReference type="ChEBI" id="CHEBI:58349"/>
    </ligand>
</feature>
<feature type="binding site" evidence="1">
    <location>
        <position position="201"/>
    </location>
    <ligand>
        <name>NADP(+)</name>
        <dbReference type="ChEBI" id="CHEBI:58349"/>
    </ligand>
</feature>
<feature type="binding site" evidence="1">
    <location>
        <position position="203"/>
    </location>
    <ligand>
        <name>NADP(+)</name>
        <dbReference type="ChEBI" id="CHEBI:58349"/>
    </ligand>
</feature>
<feature type="binding site" evidence="1">
    <location>
        <position position="213"/>
    </location>
    <ligand>
        <name>NADP(+)</name>
        <dbReference type="ChEBI" id="CHEBI:58349"/>
    </ligand>
</feature>
<feature type="binding site" evidence="1">
    <location>
        <position position="237"/>
    </location>
    <ligand>
        <name>NADP(+)</name>
        <dbReference type="ChEBI" id="CHEBI:58349"/>
    </ligand>
</feature>
<feature type="binding site" evidence="1">
    <location>
        <position position="303"/>
    </location>
    <ligand>
        <name>NADP(+)</name>
        <dbReference type="ChEBI" id="CHEBI:58349"/>
    </ligand>
</feature>
<feature type="binding site" evidence="1">
    <location>
        <position position="305"/>
    </location>
    <ligand>
        <name>NADP(+)</name>
        <dbReference type="ChEBI" id="CHEBI:58349"/>
    </ligand>
</feature>
<feature type="binding site" evidence="1">
    <location>
        <position position="306"/>
    </location>
    <ligand>
        <name>NADP(+)</name>
        <dbReference type="ChEBI" id="CHEBI:58349"/>
    </ligand>
</feature>
<feature type="binding site" description="axial binding residue" evidence="1">
    <location>
        <position position="358"/>
    </location>
    <ligand>
        <name>heme</name>
        <dbReference type="ChEBI" id="CHEBI:30413"/>
    </ligand>
    <ligandPart>
        <name>Fe</name>
        <dbReference type="ChEBI" id="CHEBI:18248"/>
    </ligandPart>
</feature>
<feature type="modified residue" description="N-acetylserine" evidence="6 12">
    <location>
        <position position="2"/>
    </location>
</feature>
<feature type="modified residue" description="Phosphoserine" evidence="1">
    <location>
        <position position="9"/>
    </location>
</feature>
<feature type="modified residue" description="N6-succinyllysine" evidence="12">
    <location>
        <position position="13"/>
    </location>
</feature>
<feature type="modified residue" description="Phosphoserine" evidence="8 10">
    <location>
        <position position="21"/>
    </location>
</feature>
<feature type="modified residue" description="N6-succinyllysine" evidence="12">
    <location>
        <position position="221"/>
    </location>
</feature>
<feature type="modified residue" description="N6-acetyllysine" evidence="11">
    <location>
        <position position="233"/>
    </location>
</feature>
<feature type="modified residue" description="N6-acetyllysine; alternate" evidence="11">
    <location>
        <position position="306"/>
    </location>
</feature>
<feature type="modified residue" description="N6-succinyllysine; alternate" evidence="12">
    <location>
        <position position="306"/>
    </location>
</feature>
<feature type="modified residue" description="Phosphoserine" evidence="9">
    <location>
        <position position="417"/>
    </location>
</feature>
<feature type="modified residue" description="Phosphoserine" evidence="8">
    <location>
        <position position="422"/>
    </location>
</feature>
<feature type="modified residue" description="N6-acetyllysine; alternate" evidence="11">
    <location>
        <position position="430"/>
    </location>
</feature>
<feature type="modified residue" description="N6-succinyllysine; alternate" evidence="12">
    <location>
        <position position="430"/>
    </location>
</feature>
<feature type="modified residue" description="Phosphoserine" evidence="9 10">
    <location>
        <position position="434"/>
    </location>
</feature>
<feature type="modified residue" description="N6-acetyllysine; alternate" evidence="11 12">
    <location>
        <position position="449"/>
    </location>
</feature>
<feature type="modified residue" description="N6-succinyllysine; alternate" evidence="12">
    <location>
        <position position="449"/>
    </location>
</feature>
<feature type="modified residue" description="N6-acetyllysine; alternate" evidence="11">
    <location>
        <position position="480"/>
    </location>
</feature>
<feature type="modified residue" description="N6-succinyllysine; alternate" evidence="12">
    <location>
        <position position="480"/>
    </location>
</feature>
<feature type="modified residue" description="N6-acetyllysine" evidence="11">
    <location>
        <position position="499"/>
    </location>
</feature>
<feature type="modified residue" description="Phosphothreonine" evidence="1">
    <location>
        <position position="511"/>
    </location>
</feature>
<feature type="modified residue" description="Phosphoserine" evidence="8 10">
    <location>
        <position position="517"/>
    </location>
</feature>
<feature type="modified residue" description="N6-succinyllysine" evidence="12">
    <location>
        <position position="522"/>
    </location>
</feature>
<feature type="mutagenesis site" description="Acatalasemia." evidence="4">
    <original>Q</original>
    <variation>H</variation>
    <location>
        <position position="11"/>
    </location>
</feature>
<feature type="sequence conflict" description="In Ref. 3; AAA66054." evidence="7" ref="3">
    <original>A</original>
    <variation>G</variation>
    <location>
        <position position="97"/>
    </location>
</feature>
<feature type="sequence conflict" description="In Ref. 1; AAA37373, 2; CAA36342, 3; AAA66054 and 4; AAH13447." evidence="7" ref="1 2 3 4">
    <original>T</original>
    <variation>A</variation>
    <location>
        <position position="117"/>
    </location>
</feature>
<feature type="sequence conflict" description="In Ref. 3; AAA66054." evidence="7" ref="3">
    <original>L</original>
    <variation>V</variation>
    <location>
        <position position="316"/>
    </location>
</feature>
<feature type="sequence conflict" description="In Ref. 3; AAA66054." evidence="7" ref="3">
    <original>M</original>
    <variation>K</variation>
    <location>
        <position position="350"/>
    </location>
</feature>
<keyword id="KW-0007">Acetylation</keyword>
<keyword id="KW-0903">Direct protein sequencing</keyword>
<keyword id="KW-0349">Heme</keyword>
<keyword id="KW-0376">Hydrogen peroxide</keyword>
<keyword id="KW-0408">Iron</keyword>
<keyword id="KW-0479">Metal-binding</keyword>
<keyword id="KW-0497">Mitogen</keyword>
<keyword id="KW-0521">NADP</keyword>
<keyword id="KW-0560">Oxidoreductase</keyword>
<keyword id="KW-0575">Peroxidase</keyword>
<keyword id="KW-0576">Peroxisome</keyword>
<keyword id="KW-0597">Phosphoprotein</keyword>
<keyword id="KW-1185">Reference proteome</keyword>
<dbReference type="EC" id="1.11.1.6" evidence="2"/>
<dbReference type="EMBL" id="M62897">
    <property type="protein sequence ID" value="AAA37373.1"/>
    <property type="molecule type" value="mRNA"/>
</dbReference>
<dbReference type="EMBL" id="X52108">
    <property type="protein sequence ID" value="CAA36342.1"/>
    <property type="molecule type" value="mRNA"/>
</dbReference>
<dbReference type="EMBL" id="L25069">
    <property type="protein sequence ID" value="AAA66054.1"/>
    <property type="molecule type" value="mRNA"/>
</dbReference>
<dbReference type="EMBL" id="AK150893">
    <property type="protein sequence ID" value="BAE29939.1"/>
    <property type="molecule type" value="mRNA"/>
</dbReference>
<dbReference type="EMBL" id="AK159152">
    <property type="protein sequence ID" value="BAE34859.1"/>
    <property type="molecule type" value="mRNA"/>
</dbReference>
<dbReference type="EMBL" id="AK159885">
    <property type="protein sequence ID" value="BAE35454.1"/>
    <property type="molecule type" value="mRNA"/>
</dbReference>
<dbReference type="EMBL" id="AK159891">
    <property type="protein sequence ID" value="BAE35458.1"/>
    <property type="molecule type" value="mRNA"/>
</dbReference>
<dbReference type="EMBL" id="AK169069">
    <property type="protein sequence ID" value="BAE40856.1"/>
    <property type="molecule type" value="mRNA"/>
</dbReference>
<dbReference type="EMBL" id="AL773505">
    <property type="status" value="NOT_ANNOTATED_CDS"/>
    <property type="molecule type" value="Genomic_DNA"/>
</dbReference>
<dbReference type="EMBL" id="CH466519">
    <property type="protein sequence ID" value="EDL27697.1"/>
    <property type="molecule type" value="Genomic_DNA"/>
</dbReference>
<dbReference type="EMBL" id="BC013447">
    <property type="protein sequence ID" value="AAH13447.1"/>
    <property type="molecule type" value="mRNA"/>
</dbReference>
<dbReference type="EMBL" id="M29394">
    <property type="protein sequence ID" value="AAA37371.1"/>
    <property type="molecule type" value="mRNA"/>
</dbReference>
<dbReference type="CCDS" id="CCDS16478.1"/>
<dbReference type="PIR" id="A36695">
    <property type="entry name" value="A36695"/>
</dbReference>
<dbReference type="RefSeq" id="NP_033934.2">
    <property type="nucleotide sequence ID" value="NM_009804.2"/>
</dbReference>
<dbReference type="SMR" id="P24270"/>
<dbReference type="BioGRID" id="198490">
    <property type="interactions" value="29"/>
</dbReference>
<dbReference type="ComplexPortal" id="CPX-4767">
    <property type="entry name" value="Catalase complex"/>
</dbReference>
<dbReference type="FunCoup" id="P24270">
    <property type="interactions" value="2115"/>
</dbReference>
<dbReference type="IntAct" id="P24270">
    <property type="interactions" value="9"/>
</dbReference>
<dbReference type="MINT" id="P24270"/>
<dbReference type="STRING" id="10090.ENSMUSP00000028610"/>
<dbReference type="GlyGen" id="P24270">
    <property type="glycosylation" value="1 site, 1 O-linked glycan (1 site)"/>
</dbReference>
<dbReference type="iPTMnet" id="P24270"/>
<dbReference type="PhosphoSitePlus" id="P24270"/>
<dbReference type="SwissPalm" id="P24270"/>
<dbReference type="CPTAC" id="non-CPTAC-3639"/>
<dbReference type="jPOST" id="P24270"/>
<dbReference type="PaxDb" id="10090-ENSMUSP00000028610"/>
<dbReference type="PeptideAtlas" id="P24270"/>
<dbReference type="ProteomicsDB" id="265446"/>
<dbReference type="Pumba" id="P24270"/>
<dbReference type="Antibodypedia" id="3595">
    <property type="antibodies" value="998 antibodies from 47 providers"/>
</dbReference>
<dbReference type="DNASU" id="12359"/>
<dbReference type="Ensembl" id="ENSMUST00000028610.10">
    <property type="protein sequence ID" value="ENSMUSP00000028610.4"/>
    <property type="gene ID" value="ENSMUSG00000027187.11"/>
</dbReference>
<dbReference type="GeneID" id="12359"/>
<dbReference type="KEGG" id="mmu:12359"/>
<dbReference type="UCSC" id="uc008liw.2">
    <property type="organism name" value="mouse"/>
</dbReference>
<dbReference type="AGR" id="MGI:88271"/>
<dbReference type="CTD" id="847"/>
<dbReference type="MGI" id="MGI:88271">
    <property type="gene designation" value="Cat"/>
</dbReference>
<dbReference type="VEuPathDB" id="HostDB:ENSMUSG00000027187"/>
<dbReference type="eggNOG" id="KOG0047">
    <property type="taxonomic scope" value="Eukaryota"/>
</dbReference>
<dbReference type="GeneTree" id="ENSGT00390000018100"/>
<dbReference type="HOGENOM" id="CLU_010645_4_1_1"/>
<dbReference type="InParanoid" id="P24270"/>
<dbReference type="OMA" id="KFRWNVF"/>
<dbReference type="OrthoDB" id="6880011at2759"/>
<dbReference type="PhylomeDB" id="P24270"/>
<dbReference type="TreeFam" id="TF300540"/>
<dbReference type="Reactome" id="R-MMU-3299685">
    <property type="pathway name" value="Detoxification of Reactive Oxygen Species"/>
</dbReference>
<dbReference type="Reactome" id="R-MMU-6798695">
    <property type="pathway name" value="Neutrophil degranulation"/>
</dbReference>
<dbReference type="Reactome" id="R-MMU-9033241">
    <property type="pathway name" value="Peroxisomal protein import"/>
</dbReference>
<dbReference type="BioGRID-ORCS" id="12359">
    <property type="hits" value="2 hits in 79 CRISPR screens"/>
</dbReference>
<dbReference type="ChiTaRS" id="Cat">
    <property type="organism name" value="mouse"/>
</dbReference>
<dbReference type="PRO" id="PR:P24270"/>
<dbReference type="Proteomes" id="UP000000589">
    <property type="component" value="Chromosome 2"/>
</dbReference>
<dbReference type="RNAct" id="P24270">
    <property type="molecule type" value="protein"/>
</dbReference>
<dbReference type="Bgee" id="ENSMUSG00000027187">
    <property type="expression patterns" value="Expressed in left lobe of liver and 262 other cell types or tissues"/>
</dbReference>
<dbReference type="ExpressionAtlas" id="P24270">
    <property type="expression patterns" value="baseline and differential"/>
</dbReference>
<dbReference type="GO" id="GO:0062151">
    <property type="term" value="C:catalase complex"/>
    <property type="evidence" value="ECO:0000266"/>
    <property type="project" value="ComplexPortal"/>
</dbReference>
<dbReference type="GO" id="GO:0005829">
    <property type="term" value="C:cytosol"/>
    <property type="evidence" value="ECO:0000304"/>
    <property type="project" value="Reactome"/>
</dbReference>
<dbReference type="GO" id="GO:0005615">
    <property type="term" value="C:extracellular space"/>
    <property type="evidence" value="ECO:0007669"/>
    <property type="project" value="Ensembl"/>
</dbReference>
<dbReference type="GO" id="GO:0005739">
    <property type="term" value="C:mitochondrion"/>
    <property type="evidence" value="ECO:0007005"/>
    <property type="project" value="MGI"/>
</dbReference>
<dbReference type="GO" id="GO:0005782">
    <property type="term" value="C:peroxisomal matrix"/>
    <property type="evidence" value="ECO:0007669"/>
    <property type="project" value="UniProtKB-SubCell"/>
</dbReference>
<dbReference type="GO" id="GO:0005778">
    <property type="term" value="C:peroxisomal membrane"/>
    <property type="evidence" value="ECO:0000314"/>
    <property type="project" value="MGI"/>
</dbReference>
<dbReference type="GO" id="GO:0005777">
    <property type="term" value="C:peroxisome"/>
    <property type="evidence" value="ECO:0000314"/>
    <property type="project" value="UniProtKB"/>
</dbReference>
<dbReference type="GO" id="GO:0004046">
    <property type="term" value="F:aminoacylase activity"/>
    <property type="evidence" value="ECO:0000315"/>
    <property type="project" value="MGI"/>
</dbReference>
<dbReference type="GO" id="GO:0004096">
    <property type="term" value="F:catalase activity"/>
    <property type="evidence" value="ECO:0000314"/>
    <property type="project" value="MGI"/>
</dbReference>
<dbReference type="GO" id="GO:0019899">
    <property type="term" value="F:enzyme binding"/>
    <property type="evidence" value="ECO:0007669"/>
    <property type="project" value="Ensembl"/>
</dbReference>
<dbReference type="GO" id="GO:0020037">
    <property type="term" value="F:heme binding"/>
    <property type="evidence" value="ECO:0007669"/>
    <property type="project" value="Ensembl"/>
</dbReference>
<dbReference type="GO" id="GO:0046872">
    <property type="term" value="F:metal ion binding"/>
    <property type="evidence" value="ECO:0007669"/>
    <property type="project" value="UniProtKB-KW"/>
</dbReference>
<dbReference type="GO" id="GO:0050661">
    <property type="term" value="F:NADP binding"/>
    <property type="evidence" value="ECO:0007669"/>
    <property type="project" value="Ensembl"/>
</dbReference>
<dbReference type="GO" id="GO:0016684">
    <property type="term" value="F:oxidoreductase activity, acting on peroxide as acceptor"/>
    <property type="evidence" value="ECO:0000314"/>
    <property type="project" value="MGI"/>
</dbReference>
<dbReference type="GO" id="GO:0042803">
    <property type="term" value="F:protein homodimerization activity"/>
    <property type="evidence" value="ECO:0007669"/>
    <property type="project" value="Ensembl"/>
</dbReference>
<dbReference type="GO" id="GO:0009060">
    <property type="term" value="P:aerobic respiration"/>
    <property type="evidence" value="ECO:0000315"/>
    <property type="project" value="MGI"/>
</dbReference>
<dbReference type="GO" id="GO:0061692">
    <property type="term" value="P:cellular detoxification of hydrogen peroxide"/>
    <property type="evidence" value="ECO:0000266"/>
    <property type="project" value="ComplexPortal"/>
</dbReference>
<dbReference type="GO" id="GO:0071363">
    <property type="term" value="P:cellular response to growth factor stimulus"/>
    <property type="evidence" value="ECO:0007669"/>
    <property type="project" value="Ensembl"/>
</dbReference>
<dbReference type="GO" id="GO:0008203">
    <property type="term" value="P:cholesterol metabolic process"/>
    <property type="evidence" value="ECO:0000315"/>
    <property type="project" value="MGI"/>
</dbReference>
<dbReference type="GO" id="GO:0020027">
    <property type="term" value="P:hemoglobin metabolic process"/>
    <property type="evidence" value="ECO:0000315"/>
    <property type="project" value="MGI"/>
</dbReference>
<dbReference type="GO" id="GO:0042744">
    <property type="term" value="P:hydrogen peroxide catabolic process"/>
    <property type="evidence" value="ECO:0000314"/>
    <property type="project" value="MGI"/>
</dbReference>
<dbReference type="GO" id="GO:0043066">
    <property type="term" value="P:negative regulation of apoptotic process"/>
    <property type="evidence" value="ECO:0007669"/>
    <property type="project" value="Ensembl"/>
</dbReference>
<dbReference type="GO" id="GO:0051781">
    <property type="term" value="P:positive regulation of cell division"/>
    <property type="evidence" value="ECO:0007669"/>
    <property type="project" value="UniProtKB-KW"/>
</dbReference>
<dbReference type="GO" id="GO:0051897">
    <property type="term" value="P:positive regulation of phosphatidylinositol 3-kinase/protein kinase B signal transduction"/>
    <property type="evidence" value="ECO:0000314"/>
    <property type="project" value="MGI"/>
</dbReference>
<dbReference type="GO" id="GO:0014823">
    <property type="term" value="P:response to activity"/>
    <property type="evidence" value="ECO:0007669"/>
    <property type="project" value="Ensembl"/>
</dbReference>
<dbReference type="GO" id="GO:0072722">
    <property type="term" value="P:response to amitrole"/>
    <property type="evidence" value="ECO:0007669"/>
    <property type="project" value="Ensembl"/>
</dbReference>
<dbReference type="GO" id="GO:0046686">
    <property type="term" value="P:response to cadmium ion"/>
    <property type="evidence" value="ECO:0007669"/>
    <property type="project" value="Ensembl"/>
</dbReference>
<dbReference type="GO" id="GO:0032355">
    <property type="term" value="P:response to estradiol"/>
    <property type="evidence" value="ECO:0007669"/>
    <property type="project" value="Ensembl"/>
</dbReference>
<dbReference type="GO" id="GO:0045471">
    <property type="term" value="P:response to ethanol"/>
    <property type="evidence" value="ECO:0007669"/>
    <property type="project" value="Ensembl"/>
</dbReference>
<dbReference type="GO" id="GO:0070542">
    <property type="term" value="P:response to fatty acid"/>
    <property type="evidence" value="ECO:0007669"/>
    <property type="project" value="Ensembl"/>
</dbReference>
<dbReference type="GO" id="GO:0055093">
    <property type="term" value="P:response to hyperoxia"/>
    <property type="evidence" value="ECO:0007669"/>
    <property type="project" value="Ensembl"/>
</dbReference>
<dbReference type="GO" id="GO:0001666">
    <property type="term" value="P:response to hypoxia"/>
    <property type="evidence" value="ECO:0007669"/>
    <property type="project" value="Ensembl"/>
</dbReference>
<dbReference type="GO" id="GO:0014854">
    <property type="term" value="P:response to inactivity"/>
    <property type="evidence" value="ECO:0007669"/>
    <property type="project" value="Ensembl"/>
</dbReference>
<dbReference type="GO" id="GO:0032868">
    <property type="term" value="P:response to insulin"/>
    <property type="evidence" value="ECO:0007669"/>
    <property type="project" value="Ensembl"/>
</dbReference>
<dbReference type="GO" id="GO:0033591">
    <property type="term" value="P:response to L-ascorbic acid"/>
    <property type="evidence" value="ECO:0007669"/>
    <property type="project" value="Ensembl"/>
</dbReference>
<dbReference type="GO" id="GO:0010288">
    <property type="term" value="P:response to lead ion"/>
    <property type="evidence" value="ECO:0007669"/>
    <property type="project" value="Ensembl"/>
</dbReference>
<dbReference type="GO" id="GO:0009642">
    <property type="term" value="P:response to light intensity"/>
    <property type="evidence" value="ECO:0007669"/>
    <property type="project" value="Ensembl"/>
</dbReference>
<dbReference type="GO" id="GO:0006979">
    <property type="term" value="P:response to oxidative stress"/>
    <property type="evidence" value="ECO:0000314"/>
    <property type="project" value="MGI"/>
</dbReference>
<dbReference type="GO" id="GO:0010193">
    <property type="term" value="P:response to ozone"/>
    <property type="evidence" value="ECO:0007669"/>
    <property type="project" value="Ensembl"/>
</dbReference>
<dbReference type="GO" id="GO:0080184">
    <property type="term" value="P:response to phenylpropanoid"/>
    <property type="evidence" value="ECO:0007669"/>
    <property type="project" value="Ensembl"/>
</dbReference>
<dbReference type="GO" id="GO:0033189">
    <property type="term" value="P:response to vitamin A"/>
    <property type="evidence" value="ECO:0007669"/>
    <property type="project" value="Ensembl"/>
</dbReference>
<dbReference type="GO" id="GO:0033197">
    <property type="term" value="P:response to vitamin E"/>
    <property type="evidence" value="ECO:0007669"/>
    <property type="project" value="Ensembl"/>
</dbReference>
<dbReference type="GO" id="GO:0009410">
    <property type="term" value="P:response to xenobiotic stimulus"/>
    <property type="evidence" value="ECO:0007669"/>
    <property type="project" value="Ensembl"/>
</dbReference>
<dbReference type="GO" id="GO:0006641">
    <property type="term" value="P:triglyceride metabolic process"/>
    <property type="evidence" value="ECO:0000315"/>
    <property type="project" value="MGI"/>
</dbReference>
<dbReference type="GO" id="GO:0001657">
    <property type="term" value="P:ureteric bud development"/>
    <property type="evidence" value="ECO:0007669"/>
    <property type="project" value="Ensembl"/>
</dbReference>
<dbReference type="GO" id="GO:0009650">
    <property type="term" value="P:UV protection"/>
    <property type="evidence" value="ECO:0007669"/>
    <property type="project" value="Ensembl"/>
</dbReference>
<dbReference type="CDD" id="cd08156">
    <property type="entry name" value="catalase_clade_3"/>
    <property type="match status" value="1"/>
</dbReference>
<dbReference type="FunFam" id="2.40.180.10:FF:000001">
    <property type="entry name" value="Catalase"/>
    <property type="match status" value="1"/>
</dbReference>
<dbReference type="Gene3D" id="2.40.180.10">
    <property type="entry name" value="Catalase core domain"/>
    <property type="match status" value="1"/>
</dbReference>
<dbReference type="InterPro" id="IPR018028">
    <property type="entry name" value="Catalase"/>
</dbReference>
<dbReference type="InterPro" id="IPR040333">
    <property type="entry name" value="Catalase_3"/>
</dbReference>
<dbReference type="InterPro" id="IPR024708">
    <property type="entry name" value="Catalase_AS"/>
</dbReference>
<dbReference type="InterPro" id="IPR024711">
    <property type="entry name" value="Catalase_clade1/3"/>
</dbReference>
<dbReference type="InterPro" id="IPR011614">
    <property type="entry name" value="Catalase_core"/>
</dbReference>
<dbReference type="InterPro" id="IPR002226">
    <property type="entry name" value="Catalase_haem_BS"/>
</dbReference>
<dbReference type="InterPro" id="IPR010582">
    <property type="entry name" value="Catalase_immune_responsive"/>
</dbReference>
<dbReference type="InterPro" id="IPR020835">
    <property type="entry name" value="Catalase_sf"/>
</dbReference>
<dbReference type="PANTHER" id="PTHR11465">
    <property type="entry name" value="CATALASE"/>
    <property type="match status" value="1"/>
</dbReference>
<dbReference type="PANTHER" id="PTHR11465:SF9">
    <property type="entry name" value="CATALASE"/>
    <property type="match status" value="1"/>
</dbReference>
<dbReference type="Pfam" id="PF00199">
    <property type="entry name" value="Catalase"/>
    <property type="match status" value="1"/>
</dbReference>
<dbReference type="Pfam" id="PF06628">
    <property type="entry name" value="Catalase-rel"/>
    <property type="match status" value="1"/>
</dbReference>
<dbReference type="PIRSF" id="PIRSF038928">
    <property type="entry name" value="Catalase_clade1-3"/>
    <property type="match status" value="1"/>
</dbReference>
<dbReference type="PRINTS" id="PR00067">
    <property type="entry name" value="CATALASE"/>
</dbReference>
<dbReference type="SMART" id="SM01060">
    <property type="entry name" value="Catalase"/>
    <property type="match status" value="1"/>
</dbReference>
<dbReference type="SUPFAM" id="SSF56634">
    <property type="entry name" value="Heme-dependent catalase-like"/>
    <property type="match status" value="1"/>
</dbReference>
<dbReference type="PROSITE" id="PS00437">
    <property type="entry name" value="CATALASE_1"/>
    <property type="match status" value="1"/>
</dbReference>
<dbReference type="PROSITE" id="PS00438">
    <property type="entry name" value="CATALASE_2"/>
    <property type="match status" value="1"/>
</dbReference>
<dbReference type="PROSITE" id="PS51402">
    <property type="entry name" value="CATALASE_3"/>
    <property type="match status" value="1"/>
</dbReference>